<accession>A6H0I8</accession>
<keyword id="KW-0665">Pyrimidine biosynthesis</keyword>
<keyword id="KW-1185">Reference proteome</keyword>
<keyword id="KW-0808">Transferase</keyword>
<comment type="function">
    <text evidence="1">Catalyzes the condensation of carbamoyl phosphate and aspartate to form carbamoyl aspartate and inorganic phosphate, the committed step in the de novo pyrimidine nucleotide biosynthesis pathway.</text>
</comment>
<comment type="catalytic activity">
    <reaction evidence="1">
        <text>carbamoyl phosphate + L-aspartate = N-carbamoyl-L-aspartate + phosphate + H(+)</text>
        <dbReference type="Rhea" id="RHEA:20013"/>
        <dbReference type="ChEBI" id="CHEBI:15378"/>
        <dbReference type="ChEBI" id="CHEBI:29991"/>
        <dbReference type="ChEBI" id="CHEBI:32814"/>
        <dbReference type="ChEBI" id="CHEBI:43474"/>
        <dbReference type="ChEBI" id="CHEBI:58228"/>
        <dbReference type="EC" id="2.1.3.2"/>
    </reaction>
</comment>
<comment type="pathway">
    <text evidence="1">Pyrimidine metabolism; UMP biosynthesis via de novo pathway; (S)-dihydroorotate from bicarbonate: step 2/3.</text>
</comment>
<comment type="subunit">
    <text evidence="1">Heterododecamer (2C3:3R2) of six catalytic PyrB chains organized as two trimers (C3), and six regulatory PyrI chains organized as three dimers (R2).</text>
</comment>
<comment type="similarity">
    <text evidence="1">Belongs to the aspartate/ornithine carbamoyltransferase superfamily. ATCase family.</text>
</comment>
<proteinExistence type="inferred from homology"/>
<name>PYRB_FLAPJ</name>
<gene>
    <name evidence="1" type="primary">pyrB</name>
    <name type="ordered locus">FP1795</name>
</gene>
<sequence length="308" mass="34072">MKELSVNNLLGIKYINENDINLVFETADHFKEVINRPIKKVPSLRDITIANIFFENSTRTKLSFELAQKRLSADVINFAASSSSVTKGETLVDTVNNILSMKVDMVVMRHASPGAAVFLSKNVKASIVNAGDGAHEHPTQALLDAYTIREKLGDVAGKKIVIVGDILHSRVALSNIYSLQKLGAEVRVCGPKTLIPKYIEALGVKVEPNLRKALEWCDVANMLRVQNERLDISYFPSTREYAMQYGLDKNLLDSLNKEIVIMHPGPINRGVEITSDVADSRQSVILNQVENGVAVRMAVIYLLASKIK</sequence>
<evidence type="ECO:0000255" key="1">
    <source>
        <dbReference type="HAMAP-Rule" id="MF_00001"/>
    </source>
</evidence>
<organism>
    <name type="scientific">Flavobacterium psychrophilum (strain ATCC 49511 / DSM 21280 / CIP 103535 / JIP02/86)</name>
    <dbReference type="NCBI Taxonomy" id="402612"/>
    <lineage>
        <taxon>Bacteria</taxon>
        <taxon>Pseudomonadati</taxon>
        <taxon>Bacteroidota</taxon>
        <taxon>Flavobacteriia</taxon>
        <taxon>Flavobacteriales</taxon>
        <taxon>Flavobacteriaceae</taxon>
        <taxon>Flavobacterium</taxon>
    </lineage>
</organism>
<protein>
    <recommendedName>
        <fullName evidence="1">Aspartate carbamoyltransferase catalytic subunit</fullName>
        <ecNumber evidence="1">2.1.3.2</ecNumber>
    </recommendedName>
    <alternativeName>
        <fullName evidence="1">Aspartate transcarbamylase</fullName>
        <shortName evidence="1">ATCase</shortName>
    </alternativeName>
</protein>
<reference key="1">
    <citation type="journal article" date="2007" name="Nat. Biotechnol.">
        <title>Complete genome sequence of the fish pathogen Flavobacterium psychrophilum.</title>
        <authorList>
            <person name="Duchaud E."/>
            <person name="Boussaha M."/>
            <person name="Loux V."/>
            <person name="Bernardet J.-F."/>
            <person name="Michel C."/>
            <person name="Kerouault B."/>
            <person name="Mondot S."/>
            <person name="Nicolas P."/>
            <person name="Bossy R."/>
            <person name="Caron C."/>
            <person name="Bessieres P."/>
            <person name="Gibrat J.-F."/>
            <person name="Claverol S."/>
            <person name="Dumetz F."/>
            <person name="Le Henaff M."/>
            <person name="Benmansour A."/>
        </authorList>
    </citation>
    <scope>NUCLEOTIDE SEQUENCE [LARGE SCALE GENOMIC DNA]</scope>
    <source>
        <strain>ATCC 49511 / DSM 21280 / CIP 103535 / JIP02/86</strain>
    </source>
</reference>
<feature type="chain" id="PRO_0000301575" description="Aspartate carbamoyltransferase catalytic subunit">
    <location>
        <begin position="1"/>
        <end position="308"/>
    </location>
</feature>
<feature type="binding site" evidence="1">
    <location>
        <position position="59"/>
    </location>
    <ligand>
        <name>carbamoyl phosphate</name>
        <dbReference type="ChEBI" id="CHEBI:58228"/>
    </ligand>
</feature>
<feature type="binding site" evidence="1">
    <location>
        <position position="60"/>
    </location>
    <ligand>
        <name>carbamoyl phosphate</name>
        <dbReference type="ChEBI" id="CHEBI:58228"/>
    </ligand>
</feature>
<feature type="binding site" evidence="1">
    <location>
        <position position="87"/>
    </location>
    <ligand>
        <name>L-aspartate</name>
        <dbReference type="ChEBI" id="CHEBI:29991"/>
    </ligand>
</feature>
<feature type="binding site" evidence="1">
    <location>
        <position position="109"/>
    </location>
    <ligand>
        <name>carbamoyl phosphate</name>
        <dbReference type="ChEBI" id="CHEBI:58228"/>
    </ligand>
</feature>
<feature type="binding site" evidence="1">
    <location>
        <position position="137"/>
    </location>
    <ligand>
        <name>carbamoyl phosphate</name>
        <dbReference type="ChEBI" id="CHEBI:58228"/>
    </ligand>
</feature>
<feature type="binding site" evidence="1">
    <location>
        <position position="140"/>
    </location>
    <ligand>
        <name>carbamoyl phosphate</name>
        <dbReference type="ChEBI" id="CHEBI:58228"/>
    </ligand>
</feature>
<feature type="binding site" evidence="1">
    <location>
        <position position="170"/>
    </location>
    <ligand>
        <name>L-aspartate</name>
        <dbReference type="ChEBI" id="CHEBI:29991"/>
    </ligand>
</feature>
<feature type="binding site" evidence="1">
    <location>
        <position position="224"/>
    </location>
    <ligand>
        <name>L-aspartate</name>
        <dbReference type="ChEBI" id="CHEBI:29991"/>
    </ligand>
</feature>
<feature type="binding site" evidence="1">
    <location>
        <position position="265"/>
    </location>
    <ligand>
        <name>carbamoyl phosphate</name>
        <dbReference type="ChEBI" id="CHEBI:58228"/>
    </ligand>
</feature>
<feature type="binding site" evidence="1">
    <location>
        <position position="266"/>
    </location>
    <ligand>
        <name>carbamoyl phosphate</name>
        <dbReference type="ChEBI" id="CHEBI:58228"/>
    </ligand>
</feature>
<dbReference type="EC" id="2.1.3.2" evidence="1"/>
<dbReference type="EMBL" id="AM398681">
    <property type="protein sequence ID" value="CAL43861.1"/>
    <property type="molecule type" value="Genomic_DNA"/>
</dbReference>
<dbReference type="RefSeq" id="WP_011963902.1">
    <property type="nucleotide sequence ID" value="NC_009613.3"/>
</dbReference>
<dbReference type="RefSeq" id="YP_001296666.1">
    <property type="nucleotide sequence ID" value="NC_009613.3"/>
</dbReference>
<dbReference type="SMR" id="A6H0I8"/>
<dbReference type="STRING" id="402612.FP1795"/>
<dbReference type="EnsemblBacteria" id="CAL43861">
    <property type="protein sequence ID" value="CAL43861"/>
    <property type="gene ID" value="FP1795"/>
</dbReference>
<dbReference type="KEGG" id="fps:FP1795"/>
<dbReference type="PATRIC" id="fig|402612.5.peg.1817"/>
<dbReference type="eggNOG" id="COG0540">
    <property type="taxonomic scope" value="Bacteria"/>
</dbReference>
<dbReference type="HOGENOM" id="CLU_043846_2_0_10"/>
<dbReference type="OrthoDB" id="9774690at2"/>
<dbReference type="UniPathway" id="UPA00070">
    <property type="reaction ID" value="UER00116"/>
</dbReference>
<dbReference type="Proteomes" id="UP000006394">
    <property type="component" value="Chromosome"/>
</dbReference>
<dbReference type="GO" id="GO:0016597">
    <property type="term" value="F:amino acid binding"/>
    <property type="evidence" value="ECO:0007669"/>
    <property type="project" value="InterPro"/>
</dbReference>
<dbReference type="GO" id="GO:0004070">
    <property type="term" value="F:aspartate carbamoyltransferase activity"/>
    <property type="evidence" value="ECO:0007669"/>
    <property type="project" value="UniProtKB-UniRule"/>
</dbReference>
<dbReference type="GO" id="GO:0006207">
    <property type="term" value="P:'de novo' pyrimidine nucleobase biosynthetic process"/>
    <property type="evidence" value="ECO:0007669"/>
    <property type="project" value="InterPro"/>
</dbReference>
<dbReference type="GO" id="GO:0044205">
    <property type="term" value="P:'de novo' UMP biosynthetic process"/>
    <property type="evidence" value="ECO:0007669"/>
    <property type="project" value="UniProtKB-UniRule"/>
</dbReference>
<dbReference type="GO" id="GO:0006520">
    <property type="term" value="P:amino acid metabolic process"/>
    <property type="evidence" value="ECO:0007669"/>
    <property type="project" value="InterPro"/>
</dbReference>
<dbReference type="FunFam" id="3.40.50.1370:FF:000007">
    <property type="entry name" value="Aspartate carbamoyltransferase"/>
    <property type="match status" value="1"/>
</dbReference>
<dbReference type="Gene3D" id="3.40.50.1370">
    <property type="entry name" value="Aspartate/ornithine carbamoyltransferase"/>
    <property type="match status" value="2"/>
</dbReference>
<dbReference type="HAMAP" id="MF_00001">
    <property type="entry name" value="Asp_carb_tr"/>
    <property type="match status" value="1"/>
</dbReference>
<dbReference type="InterPro" id="IPR006132">
    <property type="entry name" value="Asp/Orn_carbamoyltranf_P-bd"/>
</dbReference>
<dbReference type="InterPro" id="IPR006130">
    <property type="entry name" value="Asp/Orn_carbamoylTrfase"/>
</dbReference>
<dbReference type="InterPro" id="IPR036901">
    <property type="entry name" value="Asp/Orn_carbamoylTrfase_sf"/>
</dbReference>
<dbReference type="InterPro" id="IPR002082">
    <property type="entry name" value="Asp_carbamoyltransf"/>
</dbReference>
<dbReference type="InterPro" id="IPR006131">
    <property type="entry name" value="Asp_carbamoyltransf_Asp/Orn-bd"/>
</dbReference>
<dbReference type="NCBIfam" id="TIGR00670">
    <property type="entry name" value="asp_carb_tr"/>
    <property type="match status" value="1"/>
</dbReference>
<dbReference type="NCBIfam" id="NF002032">
    <property type="entry name" value="PRK00856.1"/>
    <property type="match status" value="1"/>
</dbReference>
<dbReference type="PANTHER" id="PTHR45753:SF6">
    <property type="entry name" value="ASPARTATE CARBAMOYLTRANSFERASE"/>
    <property type="match status" value="1"/>
</dbReference>
<dbReference type="PANTHER" id="PTHR45753">
    <property type="entry name" value="ORNITHINE CARBAMOYLTRANSFERASE, MITOCHONDRIAL"/>
    <property type="match status" value="1"/>
</dbReference>
<dbReference type="Pfam" id="PF00185">
    <property type="entry name" value="OTCace"/>
    <property type="match status" value="1"/>
</dbReference>
<dbReference type="Pfam" id="PF02729">
    <property type="entry name" value="OTCace_N"/>
    <property type="match status" value="1"/>
</dbReference>
<dbReference type="PRINTS" id="PR00100">
    <property type="entry name" value="AOTCASE"/>
</dbReference>
<dbReference type="PRINTS" id="PR00101">
    <property type="entry name" value="ATCASE"/>
</dbReference>
<dbReference type="SUPFAM" id="SSF53671">
    <property type="entry name" value="Aspartate/ornithine carbamoyltransferase"/>
    <property type="match status" value="1"/>
</dbReference>
<dbReference type="PROSITE" id="PS00097">
    <property type="entry name" value="CARBAMOYLTRANSFERASE"/>
    <property type="match status" value="1"/>
</dbReference>